<dbReference type="EMBL" id="K01298">
    <property type="protein sequence ID" value="AAA23694.1"/>
    <property type="molecule type" value="Genomic_DNA"/>
</dbReference>
<dbReference type="EMBL" id="U00096">
    <property type="protein sequence ID" value="AAC73125.1"/>
    <property type="molecule type" value="Genomic_DNA"/>
</dbReference>
<dbReference type="EMBL" id="AP009048">
    <property type="protein sequence ID" value="BAB96589.1"/>
    <property type="molecule type" value="Genomic_DNA"/>
</dbReference>
<dbReference type="EMBL" id="D10765">
    <property type="protein sequence ID" value="BAA01595.1"/>
    <property type="molecule type" value="Genomic_DNA"/>
</dbReference>
<dbReference type="EMBL" id="M12565">
    <property type="protein sequence ID" value="AAA23692.1"/>
    <property type="molecule type" value="Genomic_DNA"/>
</dbReference>
<dbReference type="PIR" id="A03311">
    <property type="entry name" value="IQECDK"/>
</dbReference>
<dbReference type="RefSeq" id="NP_414555.1">
    <property type="nucleotide sequence ID" value="NC_000913.3"/>
</dbReference>
<dbReference type="RefSeq" id="WP_000516135.1">
    <property type="nucleotide sequence ID" value="NZ_SSZK01000015.1"/>
</dbReference>
<dbReference type="PDB" id="1BPR">
    <property type="method" value="NMR"/>
    <property type="chains" value="A=384-561"/>
</dbReference>
<dbReference type="PDB" id="1DG4">
    <property type="method" value="NMR"/>
    <property type="chains" value="A=393-507"/>
</dbReference>
<dbReference type="PDB" id="1DKG">
    <property type="method" value="X-ray"/>
    <property type="resolution" value="2.80 A"/>
    <property type="chains" value="D=1-383"/>
</dbReference>
<dbReference type="PDB" id="1DKX">
    <property type="method" value="X-ray"/>
    <property type="resolution" value="2.00 A"/>
    <property type="chains" value="A=389-607"/>
</dbReference>
<dbReference type="PDB" id="1DKY">
    <property type="method" value="X-ray"/>
    <property type="resolution" value="2.80 A"/>
    <property type="chains" value="A/B=389-607"/>
</dbReference>
<dbReference type="PDB" id="1DKZ">
    <property type="method" value="X-ray"/>
    <property type="resolution" value="2.00 A"/>
    <property type="chains" value="A=389-607"/>
</dbReference>
<dbReference type="PDB" id="1Q5L">
    <property type="method" value="NMR"/>
    <property type="chains" value="A=393-507"/>
</dbReference>
<dbReference type="PDB" id="2BPR">
    <property type="method" value="NMR"/>
    <property type="chains" value="A=384-561"/>
</dbReference>
<dbReference type="PDB" id="2KHO">
    <property type="method" value="NMR"/>
    <property type="chains" value="A=1-605"/>
</dbReference>
<dbReference type="PDB" id="3DPO">
    <property type="method" value="X-ray"/>
    <property type="resolution" value="2.10 A"/>
    <property type="chains" value="A/B=389-607"/>
</dbReference>
<dbReference type="PDB" id="3DPP">
    <property type="method" value="X-ray"/>
    <property type="resolution" value="2.50 A"/>
    <property type="chains" value="A/B=389-607"/>
</dbReference>
<dbReference type="PDB" id="3DPQ">
    <property type="method" value="X-ray"/>
    <property type="resolution" value="2.60 A"/>
    <property type="chains" value="A/B/E/F=389-601"/>
</dbReference>
<dbReference type="PDB" id="3QNJ">
    <property type="method" value="X-ray"/>
    <property type="resolution" value="2.28 A"/>
    <property type="chains" value="A/B=389-607"/>
</dbReference>
<dbReference type="PDB" id="4B9Q">
    <property type="method" value="X-ray"/>
    <property type="resolution" value="2.40 A"/>
    <property type="chains" value="A/B/C/D=1-605"/>
</dbReference>
<dbReference type="PDB" id="4E81">
    <property type="method" value="X-ray"/>
    <property type="resolution" value="1.90 A"/>
    <property type="chains" value="A/B=389-607"/>
</dbReference>
<dbReference type="PDB" id="4EZN">
    <property type="method" value="X-ray"/>
    <property type="resolution" value="1.80 A"/>
    <property type="chains" value="A/B=389-607"/>
</dbReference>
<dbReference type="PDB" id="4EZO">
    <property type="method" value="X-ray"/>
    <property type="resolution" value="1.90 A"/>
    <property type="chains" value="A/B=389-607"/>
</dbReference>
<dbReference type="PDB" id="4EZP">
    <property type="method" value="X-ray"/>
    <property type="resolution" value="1.65 A"/>
    <property type="chains" value="A/B=389-607"/>
</dbReference>
<dbReference type="PDB" id="4EZQ">
    <property type="method" value="X-ray"/>
    <property type="resolution" value="2.00 A"/>
    <property type="chains" value="A=389-607"/>
</dbReference>
<dbReference type="PDB" id="4EZR">
    <property type="method" value="X-ray"/>
    <property type="resolution" value="1.90 A"/>
    <property type="chains" value="A=389-607"/>
</dbReference>
<dbReference type="PDB" id="4EZS">
    <property type="method" value="X-ray"/>
    <property type="resolution" value="1.90 A"/>
    <property type="chains" value="A=389-607"/>
</dbReference>
<dbReference type="PDB" id="4EZT">
    <property type="method" value="X-ray"/>
    <property type="resolution" value="2.00 A"/>
    <property type="chains" value="A=389-607"/>
</dbReference>
<dbReference type="PDB" id="4EZU">
    <property type="method" value="X-ray"/>
    <property type="resolution" value="1.90 A"/>
    <property type="chains" value="A=389-607"/>
</dbReference>
<dbReference type="PDB" id="4EZV">
    <property type="method" value="X-ray"/>
    <property type="resolution" value="2.10 A"/>
    <property type="chains" value="A/B=389-607"/>
</dbReference>
<dbReference type="PDB" id="4EZW">
    <property type="method" value="X-ray"/>
    <property type="resolution" value="1.80 A"/>
    <property type="chains" value="A/B/C/D=389-607"/>
</dbReference>
<dbReference type="PDB" id="4EZX">
    <property type="method" value="X-ray"/>
    <property type="resolution" value="1.70 A"/>
    <property type="chains" value="A/B=389-607"/>
</dbReference>
<dbReference type="PDB" id="4EZY">
    <property type="method" value="X-ray"/>
    <property type="resolution" value="1.85 A"/>
    <property type="chains" value="A=389-607"/>
</dbReference>
<dbReference type="PDB" id="4EZZ">
    <property type="method" value="X-ray"/>
    <property type="resolution" value="2.05 A"/>
    <property type="chains" value="A=389-607"/>
</dbReference>
<dbReference type="PDB" id="4F00">
    <property type="method" value="X-ray"/>
    <property type="resolution" value="1.95 A"/>
    <property type="chains" value="A=389-607"/>
</dbReference>
<dbReference type="PDB" id="4F01">
    <property type="method" value="X-ray"/>
    <property type="resolution" value="1.40 A"/>
    <property type="chains" value="A/B=389-607"/>
</dbReference>
<dbReference type="PDB" id="4HY9">
    <property type="method" value="X-ray"/>
    <property type="resolution" value="1.55 A"/>
    <property type="chains" value="A/B=389-607"/>
</dbReference>
<dbReference type="PDB" id="4HYB">
    <property type="method" value="X-ray"/>
    <property type="resolution" value="1.70 A"/>
    <property type="chains" value="A/B=389-607"/>
</dbReference>
<dbReference type="PDB" id="4JN4">
    <property type="method" value="X-ray"/>
    <property type="resolution" value="2.30 A"/>
    <property type="chains" value="A/B=2-610"/>
</dbReference>
<dbReference type="PDB" id="4JNE">
    <property type="method" value="X-ray"/>
    <property type="resolution" value="1.96 A"/>
    <property type="chains" value="A/B=2-610"/>
</dbReference>
<dbReference type="PDB" id="4JNF">
    <property type="method" value="X-ray"/>
    <property type="resolution" value="1.62 A"/>
    <property type="chains" value="A=389-610"/>
</dbReference>
<dbReference type="PDB" id="4JWC">
    <property type="method" value="X-ray"/>
    <property type="resolution" value="1.80 A"/>
    <property type="chains" value="A/B=389-607"/>
</dbReference>
<dbReference type="PDB" id="4JWD">
    <property type="method" value="X-ray"/>
    <property type="resolution" value="1.95 A"/>
    <property type="chains" value="A/B=389-607"/>
</dbReference>
<dbReference type="PDB" id="4JWE">
    <property type="method" value="X-ray"/>
    <property type="resolution" value="1.95 A"/>
    <property type="chains" value="A/B=389-607"/>
</dbReference>
<dbReference type="PDB" id="4JWI">
    <property type="method" value="X-ray"/>
    <property type="resolution" value="1.90 A"/>
    <property type="chains" value="A/B=389-607"/>
</dbReference>
<dbReference type="PDB" id="4R5G">
    <property type="method" value="X-ray"/>
    <property type="resolution" value="3.45 A"/>
    <property type="chains" value="A/B=389-607"/>
</dbReference>
<dbReference type="PDB" id="4R5I">
    <property type="method" value="X-ray"/>
    <property type="resolution" value="1.97 A"/>
    <property type="chains" value="A=389-607"/>
</dbReference>
<dbReference type="PDB" id="4R5J">
    <property type="method" value="X-ray"/>
    <property type="resolution" value="2.36 A"/>
    <property type="chains" value="A/B/C/D=389-607"/>
</dbReference>
<dbReference type="PDB" id="4R5K">
    <property type="method" value="X-ray"/>
    <property type="resolution" value="1.75 A"/>
    <property type="chains" value="A/B=389-607"/>
</dbReference>
<dbReference type="PDB" id="4R5L">
    <property type="method" value="X-ray"/>
    <property type="resolution" value="2.97 A"/>
    <property type="chains" value="A/B/C/D=389-607"/>
</dbReference>
<dbReference type="PDB" id="5NRO">
    <property type="method" value="X-ray"/>
    <property type="resolution" value="3.25 A"/>
    <property type="chains" value="A=1-605"/>
</dbReference>
<dbReference type="PDB" id="5OOW">
    <property type="method" value="X-ray"/>
    <property type="resolution" value="2.90 A"/>
    <property type="chains" value="A/B=183-383"/>
</dbReference>
<dbReference type="PDB" id="7JMM">
    <property type="method" value="X-ray"/>
    <property type="resolution" value="2.56 A"/>
    <property type="chains" value="A=389-607"/>
</dbReference>
<dbReference type="PDB" id="7JN8">
    <property type="method" value="X-ray"/>
    <property type="resolution" value="3.09 A"/>
    <property type="chains" value="A=389-607"/>
</dbReference>
<dbReference type="PDB" id="7JN9">
    <property type="method" value="X-ray"/>
    <property type="resolution" value="2.40 A"/>
    <property type="chains" value="A=389-607"/>
</dbReference>
<dbReference type="PDB" id="7JNE">
    <property type="method" value="X-ray"/>
    <property type="resolution" value="2.54 A"/>
    <property type="chains" value="A=389-607"/>
</dbReference>
<dbReference type="PDB" id="7KO2">
    <property type="method" value="X-ray"/>
    <property type="resolution" value="2.64 A"/>
    <property type="chains" value="A/B/C/D=1-609"/>
</dbReference>
<dbReference type="PDB" id="7KRT">
    <property type="method" value="X-ray"/>
    <property type="resolution" value="2.79 A"/>
    <property type="chains" value="A/B/C/D=1-600"/>
</dbReference>
<dbReference type="PDB" id="7KRU">
    <property type="method" value="X-ray"/>
    <property type="resolution" value="1.82 A"/>
    <property type="chains" value="A/B=1-540"/>
</dbReference>
<dbReference type="PDB" id="7KRV">
    <property type="method" value="X-ray"/>
    <property type="resolution" value="1.92 A"/>
    <property type="chains" value="A/B=1-540"/>
</dbReference>
<dbReference type="PDB" id="7KRW">
    <property type="method" value="X-ray"/>
    <property type="resolution" value="7.70 A"/>
    <property type="chains" value="A/B/C/D=1-614"/>
</dbReference>
<dbReference type="PDB" id="7KZI">
    <property type="method" value="X-ray"/>
    <property type="resolution" value="2.82 A"/>
    <property type="chains" value="A/B=1-609"/>
</dbReference>
<dbReference type="PDB" id="7KZU">
    <property type="method" value="X-ray"/>
    <property type="resolution" value="2.15 A"/>
    <property type="chains" value="A=2-540"/>
</dbReference>
<dbReference type="PDB" id="7N6J">
    <property type="method" value="X-ray"/>
    <property type="resolution" value="2.00 A"/>
    <property type="chains" value="A=389-607"/>
</dbReference>
<dbReference type="PDB" id="7N6K">
    <property type="method" value="X-ray"/>
    <property type="resolution" value="2.55 A"/>
    <property type="chains" value="A=389-607"/>
</dbReference>
<dbReference type="PDB" id="7N6L">
    <property type="method" value="X-ray"/>
    <property type="resolution" value="2.40 A"/>
    <property type="chains" value="A=389-607"/>
</dbReference>
<dbReference type="PDB" id="7N6M">
    <property type="method" value="X-ray"/>
    <property type="resolution" value="1.82 A"/>
    <property type="chains" value="A=389-607"/>
</dbReference>
<dbReference type="PDB" id="7RAX">
    <property type="method" value="X-ray"/>
    <property type="resolution" value="1.41 A"/>
    <property type="chains" value="A=2-393"/>
</dbReference>
<dbReference type="PDBsum" id="1BPR"/>
<dbReference type="PDBsum" id="1DG4"/>
<dbReference type="PDBsum" id="1DKG"/>
<dbReference type="PDBsum" id="1DKX"/>
<dbReference type="PDBsum" id="1DKY"/>
<dbReference type="PDBsum" id="1DKZ"/>
<dbReference type="PDBsum" id="1Q5L"/>
<dbReference type="PDBsum" id="2BPR"/>
<dbReference type="PDBsum" id="2KHO"/>
<dbReference type="PDBsum" id="3DPO"/>
<dbReference type="PDBsum" id="3DPP"/>
<dbReference type="PDBsum" id="3DPQ"/>
<dbReference type="PDBsum" id="3QNJ"/>
<dbReference type="PDBsum" id="4B9Q"/>
<dbReference type="PDBsum" id="4E81"/>
<dbReference type="PDBsum" id="4EZN"/>
<dbReference type="PDBsum" id="4EZO"/>
<dbReference type="PDBsum" id="4EZP"/>
<dbReference type="PDBsum" id="4EZQ"/>
<dbReference type="PDBsum" id="4EZR"/>
<dbReference type="PDBsum" id="4EZS"/>
<dbReference type="PDBsum" id="4EZT"/>
<dbReference type="PDBsum" id="4EZU"/>
<dbReference type="PDBsum" id="4EZV"/>
<dbReference type="PDBsum" id="4EZW"/>
<dbReference type="PDBsum" id="4EZX"/>
<dbReference type="PDBsum" id="4EZY"/>
<dbReference type="PDBsum" id="4EZZ"/>
<dbReference type="PDBsum" id="4F00"/>
<dbReference type="PDBsum" id="4F01"/>
<dbReference type="PDBsum" id="4HY9"/>
<dbReference type="PDBsum" id="4HYB"/>
<dbReference type="PDBsum" id="4JN4"/>
<dbReference type="PDBsum" id="4JNE"/>
<dbReference type="PDBsum" id="4JNF"/>
<dbReference type="PDBsum" id="4JWC"/>
<dbReference type="PDBsum" id="4JWD"/>
<dbReference type="PDBsum" id="4JWE"/>
<dbReference type="PDBsum" id="4JWI"/>
<dbReference type="PDBsum" id="4R5G"/>
<dbReference type="PDBsum" id="4R5I"/>
<dbReference type="PDBsum" id="4R5J"/>
<dbReference type="PDBsum" id="4R5K"/>
<dbReference type="PDBsum" id="4R5L"/>
<dbReference type="PDBsum" id="5NRO"/>
<dbReference type="PDBsum" id="5OOW"/>
<dbReference type="PDBsum" id="7JMM"/>
<dbReference type="PDBsum" id="7JN8"/>
<dbReference type="PDBsum" id="7JN9"/>
<dbReference type="PDBsum" id="7JNE"/>
<dbReference type="PDBsum" id="7KO2"/>
<dbReference type="PDBsum" id="7KRT"/>
<dbReference type="PDBsum" id="7KRU"/>
<dbReference type="PDBsum" id="7KRV"/>
<dbReference type="PDBsum" id="7KRW"/>
<dbReference type="PDBsum" id="7KZI"/>
<dbReference type="PDBsum" id="7KZU"/>
<dbReference type="PDBsum" id="7N6J"/>
<dbReference type="PDBsum" id="7N6K"/>
<dbReference type="PDBsum" id="7N6L"/>
<dbReference type="PDBsum" id="7N6M"/>
<dbReference type="PDBsum" id="7RAX"/>
<dbReference type="SMR" id="P0A6Y8"/>
<dbReference type="BioGRID" id="4259520">
    <property type="interactions" value="467"/>
</dbReference>
<dbReference type="BioGRID" id="849153">
    <property type="interactions" value="13"/>
</dbReference>
<dbReference type="DIP" id="DIP-35751N"/>
<dbReference type="FunCoup" id="P0A6Y8">
    <property type="interactions" value="1428"/>
</dbReference>
<dbReference type="IntAct" id="P0A6Y8">
    <property type="interactions" value="380"/>
</dbReference>
<dbReference type="MINT" id="P0A6Y8"/>
<dbReference type="STRING" id="511145.b0014"/>
<dbReference type="TCDB" id="1.A.33.1.2">
    <property type="family name" value="the cation channel-forming heat shock protein-70 (hsp70) family"/>
</dbReference>
<dbReference type="CarbonylDB" id="P0A6Y8"/>
<dbReference type="iPTMnet" id="P0A6Y8"/>
<dbReference type="jPOST" id="P0A6Y8"/>
<dbReference type="PaxDb" id="511145-b0014"/>
<dbReference type="EnsemblBacteria" id="AAC73125">
    <property type="protein sequence ID" value="AAC73125"/>
    <property type="gene ID" value="b0014"/>
</dbReference>
<dbReference type="GeneID" id="93777429"/>
<dbReference type="GeneID" id="944750"/>
<dbReference type="KEGG" id="ecj:JW0013"/>
<dbReference type="KEGG" id="eco:b0014"/>
<dbReference type="KEGG" id="ecoc:C3026_00070"/>
<dbReference type="PATRIC" id="fig|1411691.4.peg.2270"/>
<dbReference type="EchoBASE" id="EB0237"/>
<dbReference type="eggNOG" id="COG0443">
    <property type="taxonomic scope" value="Bacteria"/>
</dbReference>
<dbReference type="HOGENOM" id="CLU_005965_2_1_6"/>
<dbReference type="InParanoid" id="P0A6Y8"/>
<dbReference type="OMA" id="MGTDWKI"/>
<dbReference type="OrthoDB" id="9766019at2"/>
<dbReference type="PhylomeDB" id="P0A6Y8"/>
<dbReference type="BioCyc" id="EcoCyc:EG10241-MONOMER"/>
<dbReference type="BioCyc" id="MetaCyc:EG10241-MONOMER"/>
<dbReference type="CD-CODE" id="3A3AD14F">
    <property type="entry name" value="Aggresome"/>
</dbReference>
<dbReference type="EvolutionaryTrace" id="P0A6Y8"/>
<dbReference type="PRO" id="PR:P0A6Y8"/>
<dbReference type="Proteomes" id="UP000000625">
    <property type="component" value="Chromosome"/>
</dbReference>
<dbReference type="GO" id="GO:0005737">
    <property type="term" value="C:cytoplasm"/>
    <property type="evidence" value="ECO:0007005"/>
    <property type="project" value="UniProtKB"/>
</dbReference>
<dbReference type="GO" id="GO:0005829">
    <property type="term" value="C:cytosol"/>
    <property type="evidence" value="ECO:0000314"/>
    <property type="project" value="EcoCyc"/>
</dbReference>
<dbReference type="GO" id="GO:0016234">
    <property type="term" value="C:inclusion body"/>
    <property type="evidence" value="ECO:0000314"/>
    <property type="project" value="CACAO"/>
</dbReference>
<dbReference type="GO" id="GO:0016020">
    <property type="term" value="C:membrane"/>
    <property type="evidence" value="ECO:0007005"/>
    <property type="project" value="UniProtKB"/>
</dbReference>
<dbReference type="GO" id="GO:0005886">
    <property type="term" value="C:plasma membrane"/>
    <property type="evidence" value="ECO:0007669"/>
    <property type="project" value="UniProtKB-SubCell"/>
</dbReference>
<dbReference type="GO" id="GO:0032991">
    <property type="term" value="C:protein-containing complex"/>
    <property type="evidence" value="ECO:0000314"/>
    <property type="project" value="CAFA"/>
</dbReference>
<dbReference type="GO" id="GO:0043531">
    <property type="term" value="F:ADP binding"/>
    <property type="evidence" value="ECO:0000314"/>
    <property type="project" value="EcoCyc"/>
</dbReference>
<dbReference type="GO" id="GO:0005524">
    <property type="term" value="F:ATP binding"/>
    <property type="evidence" value="ECO:0000314"/>
    <property type="project" value="CAFA"/>
</dbReference>
<dbReference type="GO" id="GO:0016887">
    <property type="term" value="F:ATP hydrolysis activity"/>
    <property type="evidence" value="ECO:0000318"/>
    <property type="project" value="GO_Central"/>
</dbReference>
<dbReference type="GO" id="GO:0140662">
    <property type="term" value="F:ATP-dependent protein folding chaperone"/>
    <property type="evidence" value="ECO:0000314"/>
    <property type="project" value="EcoCyc"/>
</dbReference>
<dbReference type="GO" id="GO:0031072">
    <property type="term" value="F:heat shock protein binding"/>
    <property type="evidence" value="ECO:0000318"/>
    <property type="project" value="GO_Central"/>
</dbReference>
<dbReference type="GO" id="GO:0044183">
    <property type="term" value="F:protein folding chaperone"/>
    <property type="evidence" value="ECO:0000314"/>
    <property type="project" value="EcoCyc"/>
</dbReference>
<dbReference type="GO" id="GO:0051087">
    <property type="term" value="F:protein-folding chaperone binding"/>
    <property type="evidence" value="ECO:0000353"/>
    <property type="project" value="CAFA"/>
</dbReference>
<dbReference type="GO" id="GO:0016989">
    <property type="term" value="F:sigma factor antagonist activity"/>
    <property type="evidence" value="ECO:0000314"/>
    <property type="project" value="EcoCyc"/>
</dbReference>
<dbReference type="GO" id="GO:0051082">
    <property type="term" value="F:unfolded protein binding"/>
    <property type="evidence" value="ECO:0000314"/>
    <property type="project" value="CAFA"/>
</dbReference>
<dbReference type="GO" id="GO:0008270">
    <property type="term" value="F:zinc ion binding"/>
    <property type="evidence" value="ECO:0000314"/>
    <property type="project" value="EcoliWiki"/>
</dbReference>
<dbReference type="GO" id="GO:0034620">
    <property type="term" value="P:cellular response to unfolded protein"/>
    <property type="evidence" value="ECO:0000314"/>
    <property type="project" value="EcoCyc"/>
</dbReference>
<dbReference type="GO" id="GO:0051085">
    <property type="term" value="P:chaperone cofactor-dependent protein refolding"/>
    <property type="evidence" value="ECO:0000314"/>
    <property type="project" value="CAFA"/>
</dbReference>
<dbReference type="GO" id="GO:0006260">
    <property type="term" value="P:DNA replication"/>
    <property type="evidence" value="ECO:0007669"/>
    <property type="project" value="UniProtKB-KW"/>
</dbReference>
<dbReference type="GO" id="GO:0042026">
    <property type="term" value="P:protein refolding"/>
    <property type="evidence" value="ECO:0000318"/>
    <property type="project" value="GO_Central"/>
</dbReference>
<dbReference type="GO" id="GO:0043335">
    <property type="term" value="P:protein unfolding"/>
    <property type="evidence" value="ECO:0000314"/>
    <property type="project" value="EcoCyc"/>
</dbReference>
<dbReference type="GO" id="GO:0065003">
    <property type="term" value="P:protein-containing complex assembly"/>
    <property type="evidence" value="ECO:0000314"/>
    <property type="project" value="CAFA"/>
</dbReference>
<dbReference type="GO" id="GO:0009408">
    <property type="term" value="P:response to heat"/>
    <property type="evidence" value="ECO:0000314"/>
    <property type="project" value="EcoCyc"/>
</dbReference>
<dbReference type="GO" id="GO:1990169">
    <property type="term" value="P:stress response to copper ion"/>
    <property type="evidence" value="ECO:0000315"/>
    <property type="project" value="EcoCyc"/>
</dbReference>
<dbReference type="CDD" id="cd10234">
    <property type="entry name" value="ASKHA_NBD_HSP70_DnaK-like"/>
    <property type="match status" value="1"/>
</dbReference>
<dbReference type="DisProt" id="DP02985"/>
<dbReference type="FunFam" id="2.60.34.10:FF:000014">
    <property type="entry name" value="Chaperone protein DnaK HSP70"/>
    <property type="match status" value="1"/>
</dbReference>
<dbReference type="FunFam" id="1.20.1270.10:FF:000001">
    <property type="entry name" value="Molecular chaperone DnaK"/>
    <property type="match status" value="1"/>
</dbReference>
<dbReference type="FunFam" id="3.30.420.40:FF:000004">
    <property type="entry name" value="Molecular chaperone DnaK"/>
    <property type="match status" value="1"/>
</dbReference>
<dbReference type="FunFam" id="3.90.640.10:FF:000003">
    <property type="entry name" value="Molecular chaperone DnaK"/>
    <property type="match status" value="1"/>
</dbReference>
<dbReference type="Gene3D" id="1.20.1270.10">
    <property type="match status" value="1"/>
</dbReference>
<dbReference type="Gene3D" id="3.30.420.40">
    <property type="match status" value="2"/>
</dbReference>
<dbReference type="Gene3D" id="3.90.640.10">
    <property type="entry name" value="Actin, Chain A, domain 4"/>
    <property type="match status" value="1"/>
</dbReference>
<dbReference type="Gene3D" id="2.60.34.10">
    <property type="entry name" value="Substrate Binding Domain Of DNAk, Chain A, domain 1"/>
    <property type="match status" value="1"/>
</dbReference>
<dbReference type="HAMAP" id="MF_00332">
    <property type="entry name" value="DnaK"/>
    <property type="match status" value="1"/>
</dbReference>
<dbReference type="InterPro" id="IPR043129">
    <property type="entry name" value="ATPase_NBD"/>
</dbReference>
<dbReference type="InterPro" id="IPR012725">
    <property type="entry name" value="Chaperone_DnaK"/>
</dbReference>
<dbReference type="InterPro" id="IPR018181">
    <property type="entry name" value="Heat_shock_70_CS"/>
</dbReference>
<dbReference type="InterPro" id="IPR029048">
    <property type="entry name" value="HSP70_C_sf"/>
</dbReference>
<dbReference type="InterPro" id="IPR029047">
    <property type="entry name" value="HSP70_peptide-bd_sf"/>
</dbReference>
<dbReference type="InterPro" id="IPR013126">
    <property type="entry name" value="Hsp_70_fam"/>
</dbReference>
<dbReference type="NCBIfam" id="NF001413">
    <property type="entry name" value="PRK00290.1"/>
    <property type="match status" value="1"/>
</dbReference>
<dbReference type="NCBIfam" id="NF003520">
    <property type="entry name" value="PRK05183.1"/>
    <property type="match status" value="1"/>
</dbReference>
<dbReference type="NCBIfam" id="TIGR02350">
    <property type="entry name" value="prok_dnaK"/>
    <property type="match status" value="1"/>
</dbReference>
<dbReference type="PANTHER" id="PTHR19375">
    <property type="entry name" value="HEAT SHOCK PROTEIN 70KDA"/>
    <property type="match status" value="1"/>
</dbReference>
<dbReference type="Pfam" id="PF00012">
    <property type="entry name" value="HSP70"/>
    <property type="match status" value="1"/>
</dbReference>
<dbReference type="PRINTS" id="PR00301">
    <property type="entry name" value="HEATSHOCK70"/>
</dbReference>
<dbReference type="SUPFAM" id="SSF53067">
    <property type="entry name" value="Actin-like ATPase domain"/>
    <property type="match status" value="2"/>
</dbReference>
<dbReference type="SUPFAM" id="SSF100934">
    <property type="entry name" value="Heat shock protein 70kD (HSP70), C-terminal subdomain"/>
    <property type="match status" value="1"/>
</dbReference>
<dbReference type="SUPFAM" id="SSF100920">
    <property type="entry name" value="Heat shock protein 70kD (HSP70), peptide-binding domain"/>
    <property type="match status" value="1"/>
</dbReference>
<dbReference type="PROSITE" id="PS00297">
    <property type="entry name" value="HSP70_1"/>
    <property type="match status" value="1"/>
</dbReference>
<dbReference type="PROSITE" id="PS00329">
    <property type="entry name" value="HSP70_2"/>
    <property type="match status" value="1"/>
</dbReference>
<dbReference type="PROSITE" id="PS01036">
    <property type="entry name" value="HSP70_3"/>
    <property type="match status" value="1"/>
</dbReference>
<accession>P0A6Y8</accession>
<accession>P04475</accession>
<reference key="1">
    <citation type="journal article" date="1984" name="Proc. Natl. Acad. Sci. U.S.A.">
        <title>Major heat shock gene of Drosophila and the Escherichia coli heat-inducible dnaK gene are homologous.</title>
        <authorList>
            <person name="Bardwell J.C.A."/>
            <person name="Craig E.A."/>
        </authorList>
    </citation>
    <scope>NUCLEOTIDE SEQUENCE [GENOMIC DNA]</scope>
</reference>
<reference key="2">
    <citation type="journal article" date="1992" name="Nucleic Acids Res.">
        <title>Systematic sequencing of the Escherichia coli genome: analysis of the 0-2.4 min region.</title>
        <authorList>
            <person name="Yura T."/>
            <person name="Mori H."/>
            <person name="Nagai H."/>
            <person name="Nagata T."/>
            <person name="Ishihama A."/>
            <person name="Fujita N."/>
            <person name="Isono K."/>
            <person name="Mizobuchi K."/>
            <person name="Nakata A."/>
        </authorList>
    </citation>
    <scope>NUCLEOTIDE SEQUENCE [LARGE SCALE GENOMIC DNA]</scope>
    <source>
        <strain>K12</strain>
    </source>
</reference>
<reference key="3">
    <citation type="journal article" date="1997" name="Science">
        <title>The complete genome sequence of Escherichia coli K-12.</title>
        <authorList>
            <person name="Blattner F.R."/>
            <person name="Plunkett G. III"/>
            <person name="Bloch C.A."/>
            <person name="Perna N.T."/>
            <person name="Burland V."/>
            <person name="Riley M."/>
            <person name="Collado-Vides J."/>
            <person name="Glasner J.D."/>
            <person name="Rode C.K."/>
            <person name="Mayhew G.F."/>
            <person name="Gregor J."/>
            <person name="Davis N.W."/>
            <person name="Kirkpatrick H.A."/>
            <person name="Goeden M.A."/>
            <person name="Rose D.J."/>
            <person name="Mau B."/>
            <person name="Shao Y."/>
        </authorList>
    </citation>
    <scope>NUCLEOTIDE SEQUENCE [LARGE SCALE GENOMIC DNA]</scope>
    <source>
        <strain>K12 / MG1655 / ATCC 47076</strain>
    </source>
</reference>
<reference key="4">
    <citation type="journal article" date="2006" name="Mol. Syst. Biol.">
        <title>Highly accurate genome sequences of Escherichia coli K-12 strains MG1655 and W3110.</title>
        <authorList>
            <person name="Hayashi K."/>
            <person name="Morooka N."/>
            <person name="Yamamoto Y."/>
            <person name="Fujita K."/>
            <person name="Isono K."/>
            <person name="Choi S."/>
            <person name="Ohtsubo E."/>
            <person name="Baba T."/>
            <person name="Wanner B.L."/>
            <person name="Mori H."/>
            <person name="Horiuchi T."/>
        </authorList>
    </citation>
    <scope>NUCLEOTIDE SEQUENCE [LARGE SCALE GENOMIC DNA]</scope>
    <source>
        <strain>K12 / W3110 / ATCC 27325 / DSM 5911</strain>
    </source>
</reference>
<reference key="5">
    <citation type="journal article" date="1992" name="Eur. J. Biochem.">
        <title>Precursor of mitochondrial aspartate aminotransferase synthesized in Escherichia coli is complexed with heat-shock protein DnaK.</title>
        <authorList>
            <person name="Schmid D."/>
            <person name="Jaussi R."/>
            <person name="Christen P."/>
        </authorList>
    </citation>
    <scope>PROTEIN SEQUENCE OF 2-15</scope>
</reference>
<reference key="6">
    <citation type="journal article" date="1997" name="Electrophoresis">
        <title>Comparing the predicted and observed properties of proteins encoded in the genome of Escherichia coli K-12.</title>
        <authorList>
            <person name="Link A.J."/>
            <person name="Robison K."/>
            <person name="Church G.M."/>
        </authorList>
    </citation>
    <scope>PROTEIN SEQUENCE OF 2-13</scope>
    <source>
        <strain>K12 / EMG2</strain>
    </source>
</reference>
<reference key="7">
    <citation type="journal article" date="1986" name="J. Biol. Chem.">
        <title>Nucleotide sequence of the Escherichia coli dnaJ gene and purification of the gene product.</title>
        <authorList>
            <person name="Ohki M."/>
            <person name="Tamura F."/>
            <person name="Nishimura S."/>
            <person name="Uchida H."/>
        </authorList>
    </citation>
    <scope>NUCLEOTIDE SEQUENCE [GENOMIC DNA] OF 590-638</scope>
</reference>
<reference key="8">
    <citation type="journal article" date="1986" name="J. Biol. Chem.">
        <title>The nucleotide sequence of the Escherichia coli K12 dnaJ+ gene. A gene that encodes a heat shock protein.</title>
        <authorList>
            <person name="Bardwell J.C.A."/>
            <person name="Tilly K."/>
            <person name="Craig E."/>
            <person name="King J."/>
            <person name="Zylicz M."/>
            <person name="Georgopoulos C."/>
        </authorList>
    </citation>
    <scope>NUCLEOTIDE SEQUENCE [GENOMIC DNA] OF 628-638</scope>
</reference>
<reference key="9">
    <citation type="journal article" date="1992" name="J. Bacteriol.">
        <title>DNA sequence analysis of the dnaK gene of Escherichia coli B and of two dnaK genes carrying the temperature-sensitive mutations dnaK7(Ts) and dnaK756(Ts).</title>
        <authorList>
            <person name="Miyazaki T."/>
            <person name="Tanaka S."/>
            <person name="Fujita H."/>
            <person name="Itikawa H."/>
        </authorList>
    </citation>
    <scope>MUTAGENESIS OF GLY-32; GLY-455 AND GLY-468</scope>
    <source>
        <strain>B</strain>
    </source>
</reference>
<reference key="10">
    <citation type="journal article" date="1989" name="Mol. Gen. Genet.">
        <title>Involvement of DnaK protein in mini-F plasmid replication: temperature-sensitive seg mutations are located in the dnaK gene.</title>
        <authorList>
            <person name="Ezaki B."/>
            <person name="Ogura T."/>
            <person name="Mori H."/>
            <person name="Niki H."/>
            <person name="Hiraga S."/>
        </authorList>
    </citation>
    <scope>MUTAGENESIS OF GLY-32 AND VAL-436</scope>
    <source>
        <strain>K12 / W3110 / ATCC 27325 / DSM 5911</strain>
    </source>
</reference>
<reference key="11">
    <citation type="journal article" date="1995" name="Mol. Microbiol.">
        <title>Identification of phosphoproteins in Escherichia coli.</title>
        <authorList>
            <person name="Freestone P."/>
            <person name="Grant S."/>
            <person name="Toth I."/>
            <person name="Norris V."/>
        </authorList>
    </citation>
    <scope>PHOSPHORYLATION</scope>
    <scope>PROTEIN SEQUENCE OF 2-11</scope>
    <source>
        <strain>E2348/69 / EPEC / MAR001</strain>
    </source>
</reference>
<reference key="12">
    <citation type="journal article" date="1991" name="Proc. Natl. Acad. Sci. U.S.A.">
        <title>DnaK as a thermometer: threonine-199 is site of autophosphorylation and is critical for ATPase activity.</title>
        <authorList>
            <person name="McCarty J.S."/>
            <person name="Walker G.C."/>
        </authorList>
    </citation>
    <scope>PHOSPHORYLATION AT THR-199</scope>
</reference>
<reference key="13">
    <citation type="journal article" date="1994" name="J. Biol. Chem.">
        <title>Inhibition of DnaK autophosphorylation by heat shock proteins and polypeptide substrates.</title>
        <authorList>
            <person name="Panagiotidis C.A."/>
            <person name="Burkholder W.F."/>
            <person name="Gaitanaris G.A."/>
            <person name="Gragerov A."/>
            <person name="Gottesman M.E."/>
            <person name="Silverstein S.J."/>
        </authorList>
    </citation>
    <scope>PHOSPHORYLATION AT THR-199</scope>
</reference>
<reference key="14">
    <citation type="journal article" date="1997" name="Electrophoresis">
        <title>Escherichia coli proteome analysis using the gene-protein database.</title>
        <authorList>
            <person name="VanBogelen R.A."/>
            <person name="Abshire K.Z."/>
            <person name="Moldover B."/>
            <person name="Olson E.R."/>
            <person name="Neidhardt F.C."/>
        </authorList>
    </citation>
    <scope>IDENTIFICATION BY 2D-GEL</scope>
</reference>
<reference key="15">
    <citation type="journal article" date="2004" name="EMBO Rep.">
        <title>In vivo analysis of the overlapping functions of DnaK and trigger factor.</title>
        <authorList>
            <person name="Genevaux P."/>
            <person name="Keppel F."/>
            <person name="Schwager F."/>
            <person name="Langendijk-Genevaux P.S."/>
            <person name="Hartl F.U."/>
            <person name="Georgopoulos C."/>
        </authorList>
    </citation>
    <scope>DISRUPTION PHENOTYPE</scope>
    <source>
        <strain>K12 / MC4100 / ATCC 35695 / DSM 6574</strain>
    </source>
</reference>
<reference key="16">
    <citation type="journal article" date="2005" name="J. Biol. Chem.">
        <title>Protein complexes of the Escherichia coli cell envelope.</title>
        <authorList>
            <person name="Stenberg F."/>
            <person name="Chovanec P."/>
            <person name="Maslen S.L."/>
            <person name="Robinson C.V."/>
            <person name="Ilag L."/>
            <person name="von Heijne G."/>
            <person name="Daley D.O."/>
        </authorList>
    </citation>
    <scope>SUBCELLULAR LOCATION</scope>
    <source>
        <strain>BL21-DE3</strain>
    </source>
</reference>
<reference key="17">
    <citation type="journal article" date="2009" name="Mol. Cell. Proteomics">
        <title>Lysine acetylation is a highly abundant and evolutionarily conserved modification in Escherichia coli.</title>
        <authorList>
            <person name="Zhang J."/>
            <person name="Sprung R."/>
            <person name="Pei J."/>
            <person name="Tan X."/>
            <person name="Kim S."/>
            <person name="Zhu H."/>
            <person name="Liu C.F."/>
            <person name="Grishin N.V."/>
            <person name="Zhao Y."/>
        </authorList>
    </citation>
    <scope>ACETYLATION [LARGE SCALE ANALYSIS] AT LYS-109; LYS-245; LYS-304; LYS-421 AND LYS-556</scope>
    <scope>IDENTIFICATION BY MASS SPECTROMETRY</scope>
    <source>
        <strain>K12 / JW1106</strain>
        <strain>K12 / MG1655 / ATCC 47076</strain>
    </source>
</reference>
<reference key="18">
    <citation type="journal article" date="2011" name="Nat. Chem. Biol.">
        <title>Identification of lysine succinylation as a new post-translational modification.</title>
        <authorList>
            <person name="Zhang Z."/>
            <person name="Tan M."/>
            <person name="Xie Z."/>
            <person name="Dai L."/>
            <person name="Chen Y."/>
            <person name="Zhao Y."/>
        </authorList>
    </citation>
    <scope>SUCCINYLATION AT LYS-70; LYS-245; LYS-246; LYS-304; LYS-359; LYS-502; LYS-528 AND LYS-587</scope>
    <source>
        <strain>K12</strain>
    </source>
</reference>
<reference key="19">
    <citation type="journal article" date="2018" name="Int. J. Biol. Macromol.">
        <title>Identification of functional interactome of a key cell division regulatory protein CedA of E.coli.</title>
        <authorList>
            <person name="Sharma P."/>
            <person name="Tomar A.K."/>
            <person name="Kundu B."/>
        </authorList>
    </citation>
    <scope>INTERACTION WITH CEDA</scope>
</reference>
<reference key="20">
    <citation type="journal article" date="2020" name="Cell Rep.">
        <title>The YdiU Domain Modulates Bacterial Stress Signaling through Mn2+-Dependent UMPylation.</title>
        <authorList>
            <person name="Yang Y."/>
            <person name="Yue Y."/>
            <person name="Song N."/>
            <person name="Li C."/>
            <person name="Yuan Z."/>
            <person name="Wang Y."/>
            <person name="Ma Y."/>
            <person name="Li H."/>
            <person name="Zhang F."/>
            <person name="Wang W."/>
            <person name="Jia H."/>
            <person name="Li P."/>
            <person name="Li X."/>
            <person name="Wang Q."/>
            <person name="Ding Z."/>
            <person name="Dong H."/>
            <person name="Gu L."/>
            <person name="Li B."/>
        </authorList>
    </citation>
    <scope>ACTIVITY REGULATION</scope>
    <scope>URIDYLYLATION</scope>
</reference>
<reference key="21">
    <citation type="journal article" date="1996" name="Science">
        <title>Structural analysis of substrate binding by the molecular chaperone DnaK.</title>
        <authorList>
            <person name="Zhu X."/>
            <person name="Zhao X."/>
            <person name="Burkholder W.F."/>
            <person name="Gragerov A."/>
            <person name="Ogata C.M."/>
            <person name="Gottesman M.E."/>
            <person name="Hendrickson W.A."/>
        </authorList>
    </citation>
    <scope>X-RAY CRYSTALLOGRAPHY (2.0 ANGSTROMS) OF 389-607</scope>
</reference>
<reference key="22">
    <citation type="journal article" date="1998" name="Biochemistry">
        <title>NMR solution structure of the 21 kDa chaperone protein DnaK substrate binding domain: a preview of chaperone-protein interaction.</title>
        <authorList>
            <person name="Wang H."/>
            <person name="Kurochkin A.V."/>
            <person name="Pang Y."/>
            <person name="Hu W."/>
            <person name="Flynn G.C."/>
            <person name="Zuiderweg E.R.P."/>
        </authorList>
    </citation>
    <scope>STRUCTURE BY NMR OF 387-562</scope>
</reference>
<reference key="23">
    <citation type="journal article" date="2000" name="Nat. Struct. Biol.">
        <title>Structural insights into substrate binding by the molecular chaperone DnaK.</title>
        <authorList>
            <person name="Pellecchia M."/>
            <person name="Montgomery D.L."/>
            <person name="Stevens S.Y."/>
            <person name="Vander Kooi C.W."/>
            <person name="Feng H.P."/>
            <person name="Gierasch L.M."/>
            <person name="Zuiderweg E.R.P."/>
        </authorList>
    </citation>
    <scope>STRUCTURE BY NMR OF 394-508</scope>
</reference>
<sequence>MGKIIGIDLGTTNSCVAIMDGTTPRVLENAEGDRTTPSIIAYTQDGETLVGQPAKRQAVTNPQNTLFAIKRLIGRRFQDEEVQRDVSIMPFKIIAADNGDAWVEVKGQKMAPPQISAEVLKKMKKTAEDYLGEPVTEAVITVPAYFNDAQRQATKDAGRIAGLEVKRIINEPTAAALAYGLDKGTGNRTIAVYDLGGGTFDISIIEIDEVDGEKTFEVLATNGDTHLGGEDFDSRLINYLVEEFKKDQGIDLRNDPLAMQRLKEAAEKAKIELSSAQQTDVNLPYITADATGPKHMNIKVTRAKLESLVEDLVNRSIEPLKVALQDAGLSVSDIDDVILVGGQTRMPMVQKKVAEFFGKEPRKDVNPDEAVAIGAAVQGGVLTGDVKDVLLLDVTPLSLGIETMGGVMTTLIAKNTTIPTKHSQVFSTAEDNQSAVTIHVLQGERKRAADNKSLGQFNLDGINPAPRGMPQIEVTFDIDADGILHVSAKDKNSGKEQKITIKASSGLNEDEIQKMVRDAEANAEADRKFEELVQTRNQGDHLLHSTRKQVEEAGDKLPADDKTAIESALTALETALKGEDKAAIEAKMQELAQVSQKLMEIAQQQHAQQQTAGADASANNAKDDDVVDAEFEEVKDKK</sequence>
<comment type="function">
    <text>Plays an essential role in the initiation of phage lambda DNA replication, where it acts in an ATP-dependent fashion with the DnaJ protein to release lambda O and P proteins from the preprimosomal complex. DnaK is also involved in chromosomal DNA replication, possibly through an analogous interaction with the DnaA protein. Also participates actively in the response to hyperosmotic shock.</text>
</comment>
<comment type="activity regulation">
    <text evidence="11">UMPylation of the chaperone by SelO/YdiU negatively regulates its activity, and may facilitate survival under stress conditions.</text>
</comment>
<comment type="subunit">
    <text evidence="10">In pull-down experiments interacts with CedA (PubMed:28818726).</text>
</comment>
<comment type="interaction">
    <interactant intactId="EBI-542092">
        <id>P0A6Y8</id>
    </interactant>
    <interactant intactId="EBI-544200">
        <id>P0AC38</id>
        <label>aspA</label>
    </interactant>
    <organismsDiffer>false</organismsDiffer>
    <experiments>3</experiments>
</comment>
<comment type="interaction">
    <interactant intactId="EBI-542092">
        <id>P0A6Y8</id>
    </interactant>
    <interactant intactId="EBI-546131">
        <id>P36659</id>
        <label>cbpA</label>
    </interactant>
    <organismsDiffer>false</organismsDiffer>
    <experiments>5</experiments>
</comment>
<comment type="interaction">
    <interactant intactId="EBI-542092">
        <id>P0A6Y8</id>
    </interactant>
    <interactant intactId="EBI-546182">
        <id>P63284</id>
        <label>clpB</label>
    </interactant>
    <organismsDiffer>false</organismsDiffer>
    <experiments>8</experiments>
</comment>
<comment type="interaction">
    <interactant intactId="EBI-542092">
        <id>P0A6Y8</id>
    </interactant>
    <interactant intactId="EBI-545285">
        <id>P08622</id>
        <label>dnaJ</label>
    </interactant>
    <organismsDiffer>false</organismsDiffer>
    <experiments>8</experiments>
</comment>
<comment type="interaction">
    <interactant intactId="EBI-542092">
        <id>P0A6Y8</id>
    </interactant>
    <interactant intactId="EBI-542783">
        <id>P0AAI5</id>
        <label>fabF</label>
    </interactant>
    <organismsDiffer>false</organismsDiffer>
    <experiments>3</experiments>
</comment>
<comment type="interaction">
    <interactant intactId="EBI-542092">
        <id>P0A6Y8</id>
    </interactant>
    <interactant intactId="EBI-370916">
        <id>P0AB71</id>
        <label>fbaA</label>
    </interactant>
    <organismsDiffer>false</organismsDiffer>
    <experiments>3</experiments>
</comment>
<comment type="interaction">
    <interactant intactId="EBI-542092">
        <id>P0A6Y8</id>
    </interactant>
    <interactant intactId="EBI-551143">
        <id>P0AC81</id>
        <label>gloA</label>
    </interactant>
    <organismsDiffer>false</organismsDiffer>
    <experiments>3</experiments>
</comment>
<comment type="interaction">
    <interactant intactId="EBI-542092">
        <id>P0A6Y8</id>
    </interactant>
    <interactant intactId="EBI-547441">
        <id>P09372</id>
        <label>grpE</label>
    </interactant>
    <organismsDiffer>false</organismsDiffer>
    <experiments>10</experiments>
</comment>
<comment type="interaction">
    <interactant intactId="EBI-542092">
        <id>P0A6Y8</id>
    </interactant>
    <interactant intactId="EBI-369221">
        <id>P0A6Z3</id>
        <label>htpG</label>
    </interactant>
    <organismsDiffer>false</organismsDiffer>
    <experiments>3</experiments>
</comment>
<comment type="interaction">
    <interactant intactId="EBI-542092">
        <id>P0A6Y8</id>
    </interactant>
    <interactant intactId="EBI-562313">
        <id>P45578</id>
        <label>luxS</label>
    </interactant>
    <organismsDiffer>false</organismsDiffer>
    <experiments>2</experiments>
</comment>
<comment type="interaction">
    <interactant intactId="EBI-542092">
        <id>P0A6Y8</id>
    </interactant>
    <interactant intactId="EBI-554435">
        <id>P12282</id>
        <label>moeB</label>
    </interactant>
    <organismsDiffer>false</organismsDiffer>
    <experiments>2</experiments>
</comment>
<comment type="interaction">
    <interactant intactId="EBI-542092">
        <id>P0A6Y8</id>
    </interactant>
    <interactant intactId="EBI-555196">
        <id>P69924</id>
        <label>nrdB</label>
    </interactant>
    <organismsDiffer>false</organismsDiffer>
    <experiments>2</experiments>
</comment>
<comment type="interaction">
    <interactant intactId="EBI-542092">
        <id>P0A6Y8</id>
    </interactant>
    <interactant intactId="EBI-556687">
        <id>P28304</id>
        <label>qorA</label>
    </interactant>
    <organismsDiffer>false</organismsDiffer>
    <experiments>2</experiments>
</comment>
<comment type="interaction">
    <interactant intactId="EBI-542092">
        <id>P0A6Y8</id>
    </interactant>
    <interactant intactId="EBI-549958">
        <id>P21513</id>
        <label>rne</label>
    </interactant>
    <organismsDiffer>false</organismsDiffer>
    <experiments>10</experiments>
</comment>
<comment type="interaction">
    <interactant intactId="EBI-542092">
        <id>P0A6Y8</id>
    </interactant>
    <interactant intactId="EBI-555342">
        <id>P0AGB3</id>
        <label>rpoH</label>
    </interactant>
    <organismsDiffer>false</organismsDiffer>
    <experiments>7</experiments>
</comment>
<comment type="interaction">
    <interactant intactId="EBI-542092">
        <id>P0A6Y8</id>
    </interactant>
    <interactant intactId="EBI-561207">
        <id>P0ADX9</id>
        <label>rsmD</label>
    </interactant>
    <organismsDiffer>false</organismsDiffer>
    <experiments>2</experiments>
</comment>
<comment type="interaction">
    <interactant intactId="EBI-542092">
        <id>P0A6Y8</id>
    </interactant>
    <interactant intactId="EBI-557952">
        <id>P23721</id>
        <label>serC</label>
    </interactant>
    <organismsDiffer>false</organismsDiffer>
    <experiments>2</experiments>
</comment>
<comment type="interaction">
    <interactant intactId="EBI-542092">
        <id>P0A6Y8</id>
    </interactant>
    <interactant intactId="EBI-371316">
        <id>P0A853</id>
        <label>tnaA</label>
    </interactant>
    <organismsDiffer>false</organismsDiffer>
    <experiments>2</experiments>
</comment>
<comment type="interaction">
    <interactant intactId="EBI-542092">
        <id>P0A6Y8</id>
    </interactant>
    <interactant intactId="EBI-544817">
        <id>P0ACX3</id>
        <label>ydhR</label>
    </interactant>
    <organismsDiffer>false</organismsDiffer>
    <experiments>3</experiments>
</comment>
<comment type="interaction">
    <interactant intactId="EBI-542092">
        <id>P0A6Y8</id>
    </interactant>
    <interactant intactId="EBI-557727">
        <id>Q46906</id>
        <label>ygcP</label>
    </interactant>
    <organismsDiffer>false</organismsDiffer>
    <experiments>3</experiments>
</comment>
<comment type="interaction">
    <interactant intactId="EBI-542092">
        <id>P0A6Y8</id>
    </interactant>
    <interactant intactId="EBI-548519">
        <id>P37342</id>
        <label>yjjI</label>
    </interactant>
    <organismsDiffer>false</organismsDiffer>
    <experiments>2</experiments>
</comment>
<comment type="interaction">
    <interactant intactId="EBI-542092">
        <id>P0A6Y8</id>
    </interactant>
    <interactant intactId="EBI-2622890">
        <id>P04233</id>
        <label>CD74</label>
    </interactant>
    <organismsDiffer>true</organismsDiffer>
    <experiments>8</experiments>
</comment>
<comment type="interaction">
    <interactant intactId="EBI-542092">
        <id>P0A6Y8</id>
    </interactant>
    <interactant intactId="EBI-25339717">
        <id>A0A0G4PYZ0</id>
        <label>HLA-DRB1</label>
    </interactant>
    <organismsDiffer>true</organismsDiffer>
    <experiments>7</experiments>
</comment>
<comment type="subcellular location">
    <subcellularLocation>
        <location evidence="5">Cytoplasm</location>
    </subcellularLocation>
    <subcellularLocation>
        <location evidence="5">Cell inner membrane</location>
        <topology evidence="5">Peripheral membrane protein</topology>
    </subcellularLocation>
</comment>
<comment type="PTM">
    <text evidence="6 12 13">Autophosphorylated; GrpE inhibits the autophosphorylation.</text>
</comment>
<comment type="PTM">
    <text evidence="11">Can be UMPylated on a tyrosine residue by SelO/YdiU, probably under stress conditions.</text>
</comment>
<comment type="disruption phenotype">
    <text evidence="3">Non-essential; synthetic lethality is seen in a triple tig-dnaK-dnaJ disruption, although this depends on temperature (triple disruptions grow slowly at 20 and 34 degrees Celsius but not at all at 43 degrees) and strain background.</text>
</comment>
<comment type="similarity">
    <text evidence="15">Belongs to the heat shock protein 70 family.</text>
</comment>
<protein>
    <recommendedName>
        <fullName>Chaperone protein DnaK</fullName>
    </recommendedName>
    <alternativeName>
        <fullName>HSP70</fullName>
    </alternativeName>
    <alternativeName>
        <fullName>Heat shock 70 kDa protein</fullName>
    </alternativeName>
    <alternativeName>
        <fullName>Heat shock protein 70</fullName>
    </alternativeName>
</protein>
<organism>
    <name type="scientific">Escherichia coli (strain K12)</name>
    <dbReference type="NCBI Taxonomy" id="83333"/>
    <lineage>
        <taxon>Bacteria</taxon>
        <taxon>Pseudomonadati</taxon>
        <taxon>Pseudomonadota</taxon>
        <taxon>Gammaproteobacteria</taxon>
        <taxon>Enterobacterales</taxon>
        <taxon>Enterobacteriaceae</taxon>
        <taxon>Escherichia</taxon>
    </lineage>
</organism>
<proteinExistence type="evidence at protein level"/>
<gene>
    <name type="primary">dnaK</name>
    <name type="synonym">groP</name>
    <name type="synonym">grpF</name>
    <name type="synonym">seg</name>
    <name type="ordered locus">b0014</name>
    <name type="ordered locus">JW0013</name>
</gene>
<name>DNAK_ECOLI</name>
<keyword id="KW-0002">3D-structure</keyword>
<keyword id="KW-0007">Acetylation</keyword>
<keyword id="KW-0067">ATP-binding</keyword>
<keyword id="KW-0997">Cell inner membrane</keyword>
<keyword id="KW-1003">Cell membrane</keyword>
<keyword id="KW-0143">Chaperone</keyword>
<keyword id="KW-0963">Cytoplasm</keyword>
<keyword id="KW-0903">Direct protein sequencing</keyword>
<keyword id="KW-0235">DNA replication</keyword>
<keyword id="KW-0472">Membrane</keyword>
<keyword id="KW-0547">Nucleotide-binding</keyword>
<keyword id="KW-0597">Phosphoprotein</keyword>
<keyword id="KW-1185">Reference proteome</keyword>
<keyword id="KW-0346">Stress response</keyword>
<evidence type="ECO:0000256" key="1">
    <source>
        <dbReference type="SAM" id="MobiDB-lite"/>
    </source>
</evidence>
<evidence type="ECO:0000269" key="2">
    <source>
    </source>
</evidence>
<evidence type="ECO:0000269" key="3">
    <source>
    </source>
</evidence>
<evidence type="ECO:0000269" key="4">
    <source>
    </source>
</evidence>
<evidence type="ECO:0000269" key="5">
    <source>
    </source>
</evidence>
<evidence type="ECO:0000269" key="6">
    <source>
    </source>
</evidence>
<evidence type="ECO:0000269" key="7">
    <source>
    </source>
</evidence>
<evidence type="ECO:0000269" key="8">
    <source>
    </source>
</evidence>
<evidence type="ECO:0000269" key="9">
    <source>
    </source>
</evidence>
<evidence type="ECO:0000269" key="10">
    <source>
    </source>
</evidence>
<evidence type="ECO:0000269" key="11">
    <source>
    </source>
</evidence>
<evidence type="ECO:0000269" key="12">
    <source>
    </source>
</evidence>
<evidence type="ECO:0000269" key="13">
    <source>
    </source>
</evidence>
<evidence type="ECO:0000269" key="14">
    <source>
    </source>
</evidence>
<evidence type="ECO:0000305" key="15"/>
<evidence type="ECO:0007829" key="16">
    <source>
        <dbReference type="PDB" id="1BPR"/>
    </source>
</evidence>
<evidence type="ECO:0007829" key="17">
    <source>
        <dbReference type="PDB" id="1Q5L"/>
    </source>
</evidence>
<evidence type="ECO:0007829" key="18">
    <source>
        <dbReference type="PDB" id="2KHO"/>
    </source>
</evidence>
<evidence type="ECO:0007829" key="19">
    <source>
        <dbReference type="PDB" id="4EZW"/>
    </source>
</evidence>
<evidence type="ECO:0007829" key="20">
    <source>
        <dbReference type="PDB" id="4F01"/>
    </source>
</evidence>
<evidence type="ECO:0007829" key="21">
    <source>
        <dbReference type="PDB" id="4JNE"/>
    </source>
</evidence>
<evidence type="ECO:0007829" key="22">
    <source>
        <dbReference type="PDB" id="4JNF"/>
    </source>
</evidence>
<evidence type="ECO:0007829" key="23">
    <source>
        <dbReference type="PDB" id="7KRU"/>
    </source>
</evidence>
<evidence type="ECO:0007829" key="24">
    <source>
        <dbReference type="PDB" id="7KRV"/>
    </source>
</evidence>
<evidence type="ECO:0007829" key="25">
    <source>
        <dbReference type="PDB" id="7KZU"/>
    </source>
</evidence>
<feature type="initiator methionine" description="Removed" evidence="2 12 14">
    <location>
        <position position="1"/>
    </location>
</feature>
<feature type="chain" id="PRO_0000078458" description="Chaperone protein DnaK">
    <location>
        <begin position="2"/>
        <end position="638"/>
    </location>
</feature>
<feature type="region of interest" description="Disordered" evidence="1">
    <location>
        <begin position="602"/>
        <end position="638"/>
    </location>
</feature>
<feature type="compositionally biased region" description="Low complexity" evidence="1">
    <location>
        <begin position="602"/>
        <end position="620"/>
    </location>
</feature>
<feature type="modified residue" description="N6-succinyllysine" evidence="8">
    <location>
        <position position="70"/>
    </location>
</feature>
<feature type="modified residue" description="N6-acetyllysine" evidence="7">
    <location>
        <position position="109"/>
    </location>
</feature>
<feature type="modified residue" description="Phosphothreonine; by autocatalysis" evidence="6 13">
    <location>
        <position position="199"/>
    </location>
</feature>
<feature type="modified residue" description="N6-acetyllysine; alternate" evidence="7">
    <location>
        <position position="245"/>
    </location>
</feature>
<feature type="modified residue" description="N6-succinyllysine; alternate" evidence="8">
    <location>
        <position position="245"/>
    </location>
</feature>
<feature type="modified residue" description="N6-succinyllysine" evidence="8">
    <location>
        <position position="246"/>
    </location>
</feature>
<feature type="modified residue" description="N6-acetyllysine; alternate" evidence="7">
    <location>
        <position position="304"/>
    </location>
</feature>
<feature type="modified residue" description="N6-succinyllysine; alternate" evidence="8">
    <location>
        <position position="304"/>
    </location>
</feature>
<feature type="modified residue" description="N6-succinyllysine" evidence="8">
    <location>
        <position position="359"/>
    </location>
</feature>
<feature type="modified residue" description="N6-acetyllysine" evidence="7">
    <location>
        <position position="421"/>
    </location>
</feature>
<feature type="modified residue" description="N6-succinyllysine" evidence="8">
    <location>
        <position position="502"/>
    </location>
</feature>
<feature type="modified residue" description="N6-succinyllysine" evidence="8">
    <location>
        <position position="528"/>
    </location>
</feature>
<feature type="modified residue" description="N6-acetyllysine" evidence="7">
    <location>
        <position position="556"/>
    </location>
</feature>
<feature type="modified residue" description="N6-succinyllysine" evidence="8">
    <location>
        <position position="587"/>
    </location>
</feature>
<feature type="mutagenesis site" description="In SEG-1 and dnaK756(TS); confers temperature sensitivity." evidence="4 9">
    <original>G</original>
    <variation>D</variation>
    <location>
        <position position="32"/>
    </location>
</feature>
<feature type="mutagenesis site" description="In SEG-2; confers temperature sensitivity." evidence="9">
    <original>V</original>
    <variation>I</variation>
    <location>
        <position position="436"/>
    </location>
</feature>
<feature type="mutagenesis site" description="In dnaK756(TS); confers temperature sensitivity." evidence="4">
    <original>G</original>
    <variation>D</variation>
    <location>
        <position position="455"/>
    </location>
</feature>
<feature type="mutagenesis site" description="In dnaK756(TS); confers temperature sensitivity." evidence="4">
    <original>G</original>
    <variation>D</variation>
    <location>
        <position position="468"/>
    </location>
</feature>
<feature type="strand" evidence="23">
    <location>
        <begin position="4"/>
        <end position="8"/>
    </location>
</feature>
<feature type="strand" evidence="23">
    <location>
        <begin position="11"/>
        <end position="20"/>
    </location>
</feature>
<feature type="strand" evidence="23">
    <location>
        <begin position="23"/>
        <end position="26"/>
    </location>
</feature>
<feature type="strand" evidence="23">
    <location>
        <begin position="34"/>
        <end position="37"/>
    </location>
</feature>
<feature type="strand" evidence="23">
    <location>
        <begin position="39"/>
        <end position="42"/>
    </location>
</feature>
<feature type="strand" evidence="23">
    <location>
        <begin position="48"/>
        <end position="51"/>
    </location>
</feature>
<feature type="helix" evidence="23">
    <location>
        <begin position="52"/>
        <end position="56"/>
    </location>
</feature>
<feature type="helix" evidence="23">
    <location>
        <begin position="58"/>
        <end position="60"/>
    </location>
</feature>
<feature type="helix" evidence="23">
    <location>
        <begin position="62"/>
        <end position="64"/>
    </location>
</feature>
<feature type="strand" evidence="23">
    <location>
        <begin position="65"/>
        <end position="67"/>
    </location>
</feature>
<feature type="helix" evidence="23">
    <location>
        <begin position="69"/>
        <end position="71"/>
    </location>
</feature>
<feature type="turn" evidence="23">
    <location>
        <begin position="72"/>
        <end position="74"/>
    </location>
</feature>
<feature type="strand" evidence="18">
    <location>
        <begin position="76"/>
        <end position="79"/>
    </location>
</feature>
<feature type="helix" evidence="23">
    <location>
        <begin position="80"/>
        <end position="88"/>
    </location>
</feature>
<feature type="strand" evidence="23">
    <location>
        <begin position="90"/>
        <end position="95"/>
    </location>
</feature>
<feature type="strand" evidence="23">
    <location>
        <begin position="99"/>
        <end position="105"/>
    </location>
</feature>
<feature type="strand" evidence="23">
    <location>
        <begin position="108"/>
        <end position="110"/>
    </location>
</feature>
<feature type="helix" evidence="23">
    <location>
        <begin position="112"/>
        <end position="131"/>
    </location>
</feature>
<feature type="strand" evidence="23">
    <location>
        <begin position="137"/>
        <end position="142"/>
    </location>
</feature>
<feature type="helix" evidence="23">
    <location>
        <begin position="148"/>
        <end position="160"/>
    </location>
</feature>
<feature type="strand" evidence="23">
    <location>
        <begin position="164"/>
        <end position="170"/>
    </location>
</feature>
<feature type="helix" evidence="23">
    <location>
        <begin position="171"/>
        <end position="179"/>
    </location>
</feature>
<feature type="strand" evidence="23">
    <location>
        <begin position="186"/>
        <end position="195"/>
    </location>
</feature>
<feature type="strand" evidence="23">
    <location>
        <begin position="200"/>
        <end position="210"/>
    </location>
</feature>
<feature type="strand" evidence="23">
    <location>
        <begin position="213"/>
        <end position="224"/>
    </location>
</feature>
<feature type="helix" evidence="23">
    <location>
        <begin position="229"/>
        <end position="248"/>
    </location>
</feature>
<feature type="helix" evidence="23">
    <location>
        <begin position="252"/>
        <end position="254"/>
    </location>
</feature>
<feature type="helix" evidence="23">
    <location>
        <begin position="256"/>
        <end position="272"/>
    </location>
</feature>
<feature type="turn" evidence="23">
    <location>
        <begin position="273"/>
        <end position="275"/>
    </location>
</feature>
<feature type="strand" evidence="23">
    <location>
        <begin position="277"/>
        <end position="289"/>
    </location>
</feature>
<feature type="strand" evidence="23">
    <location>
        <begin position="292"/>
        <end position="301"/>
    </location>
</feature>
<feature type="helix" evidence="23">
    <location>
        <begin position="302"/>
        <end position="315"/>
    </location>
</feature>
<feature type="helix" evidence="23">
    <location>
        <begin position="317"/>
        <end position="327"/>
    </location>
</feature>
<feature type="helix" evidence="23">
    <location>
        <begin position="331"/>
        <end position="333"/>
    </location>
</feature>
<feature type="strand" evidence="23">
    <location>
        <begin position="336"/>
        <end position="341"/>
    </location>
</feature>
<feature type="helix" evidence="23">
    <location>
        <begin position="342"/>
        <end position="345"/>
    </location>
</feature>
<feature type="helix" evidence="23">
    <location>
        <begin position="347"/>
        <end position="357"/>
    </location>
</feature>
<feature type="strand" evidence="24">
    <location>
        <begin position="363"/>
        <end position="365"/>
    </location>
</feature>
<feature type="turn" evidence="23">
    <location>
        <begin position="367"/>
        <end position="369"/>
    </location>
</feature>
<feature type="helix" evidence="23">
    <location>
        <begin position="370"/>
        <end position="382"/>
    </location>
</feature>
<feature type="strand" evidence="25">
    <location>
        <begin position="384"/>
        <end position="386"/>
    </location>
</feature>
<feature type="strand" evidence="23">
    <location>
        <begin position="388"/>
        <end position="391"/>
    </location>
</feature>
<feature type="strand" evidence="19">
    <location>
        <begin position="392"/>
        <end position="395"/>
    </location>
</feature>
<feature type="strand" evidence="20">
    <location>
        <begin position="399"/>
        <end position="403"/>
    </location>
</feature>
<feature type="turn" evidence="20">
    <location>
        <begin position="404"/>
        <end position="406"/>
    </location>
</feature>
<feature type="strand" evidence="20">
    <location>
        <begin position="407"/>
        <end position="412"/>
    </location>
</feature>
<feature type="strand" evidence="17">
    <location>
        <begin position="414"/>
        <end position="416"/>
    </location>
</feature>
<feature type="strand" evidence="20">
    <location>
        <begin position="417"/>
        <end position="430"/>
    </location>
</feature>
<feature type="strand" evidence="21">
    <location>
        <begin position="432"/>
        <end position="434"/>
    </location>
</feature>
<feature type="strand" evidence="20">
    <location>
        <begin position="436"/>
        <end position="444"/>
    </location>
</feature>
<feature type="strand" evidence="17">
    <location>
        <begin position="445"/>
        <end position="447"/>
    </location>
</feature>
<feature type="helix" evidence="20">
    <location>
        <begin position="448"/>
        <end position="450"/>
    </location>
</feature>
<feature type="strand" evidence="20">
    <location>
        <begin position="451"/>
        <end position="459"/>
    </location>
</feature>
<feature type="helix" evidence="22">
    <location>
        <begin position="466"/>
        <end position="468"/>
    </location>
</feature>
<feature type="strand" evidence="20">
    <location>
        <begin position="472"/>
        <end position="478"/>
    </location>
</feature>
<feature type="strand" evidence="16">
    <location>
        <begin position="480"/>
        <end position="482"/>
    </location>
</feature>
<feature type="strand" evidence="20">
    <location>
        <begin position="484"/>
        <end position="490"/>
    </location>
</feature>
<feature type="turn" evidence="20">
    <location>
        <begin position="491"/>
        <end position="493"/>
    </location>
</feature>
<feature type="strand" evidence="20">
    <location>
        <begin position="496"/>
        <end position="500"/>
    </location>
</feature>
<feature type="helix" evidence="20">
    <location>
        <begin position="503"/>
        <end position="505"/>
    </location>
</feature>
<feature type="helix" evidence="20">
    <location>
        <begin position="509"/>
        <end position="521"/>
    </location>
</feature>
<feature type="helix" evidence="20">
    <location>
        <begin position="523"/>
        <end position="553"/>
    </location>
</feature>
<feature type="helix" evidence="20">
    <location>
        <begin position="554"/>
        <end position="556"/>
    </location>
</feature>
<feature type="helix" evidence="20">
    <location>
        <begin position="559"/>
        <end position="577"/>
    </location>
</feature>
<feature type="helix" evidence="20">
    <location>
        <begin position="581"/>
        <end position="594"/>
    </location>
</feature>
<feature type="helix" evidence="20">
    <location>
        <begin position="596"/>
        <end position="600"/>
    </location>
</feature>